<keyword id="KW-0963">Cytoplasm</keyword>
<keyword id="KW-0570">Pentose shunt</keyword>
<keyword id="KW-0704">Schiff base</keyword>
<keyword id="KW-0808">Transferase</keyword>
<dbReference type="EC" id="2.2.1.2" evidence="1"/>
<dbReference type="EMBL" id="CP000609">
    <property type="protein sequence ID" value="ABO34601.1"/>
    <property type="molecule type" value="Genomic_DNA"/>
</dbReference>
<dbReference type="RefSeq" id="WP_011868056.1">
    <property type="nucleotide sequence ID" value="NC_009135.1"/>
</dbReference>
<dbReference type="SMR" id="A4FWM6"/>
<dbReference type="STRING" id="402880.MmarC5_0285"/>
<dbReference type="GeneID" id="4927608"/>
<dbReference type="KEGG" id="mmq:MmarC5_0285"/>
<dbReference type="eggNOG" id="arCOG05061">
    <property type="taxonomic scope" value="Archaea"/>
</dbReference>
<dbReference type="HOGENOM" id="CLU_079764_0_0_2"/>
<dbReference type="OrthoDB" id="6661at2157"/>
<dbReference type="UniPathway" id="UPA00115">
    <property type="reaction ID" value="UER00414"/>
</dbReference>
<dbReference type="Proteomes" id="UP000000253">
    <property type="component" value="Chromosome"/>
</dbReference>
<dbReference type="GO" id="GO:0005737">
    <property type="term" value="C:cytoplasm"/>
    <property type="evidence" value="ECO:0007669"/>
    <property type="project" value="UniProtKB-SubCell"/>
</dbReference>
<dbReference type="GO" id="GO:0016832">
    <property type="term" value="F:aldehyde-lyase activity"/>
    <property type="evidence" value="ECO:0007669"/>
    <property type="project" value="InterPro"/>
</dbReference>
<dbReference type="GO" id="GO:0004801">
    <property type="term" value="F:transaldolase activity"/>
    <property type="evidence" value="ECO:0007669"/>
    <property type="project" value="UniProtKB-UniRule"/>
</dbReference>
<dbReference type="GO" id="GO:0005975">
    <property type="term" value="P:carbohydrate metabolic process"/>
    <property type="evidence" value="ECO:0007669"/>
    <property type="project" value="InterPro"/>
</dbReference>
<dbReference type="GO" id="GO:0006098">
    <property type="term" value="P:pentose-phosphate shunt"/>
    <property type="evidence" value="ECO:0007669"/>
    <property type="project" value="UniProtKB-UniRule"/>
</dbReference>
<dbReference type="CDD" id="cd00956">
    <property type="entry name" value="Transaldolase_FSA"/>
    <property type="match status" value="1"/>
</dbReference>
<dbReference type="FunFam" id="3.20.20.70:FF:000018">
    <property type="entry name" value="Probable transaldolase"/>
    <property type="match status" value="1"/>
</dbReference>
<dbReference type="Gene3D" id="3.20.20.70">
    <property type="entry name" value="Aldolase class I"/>
    <property type="match status" value="1"/>
</dbReference>
<dbReference type="HAMAP" id="MF_00494">
    <property type="entry name" value="Transaldolase_3b"/>
    <property type="match status" value="1"/>
</dbReference>
<dbReference type="InterPro" id="IPR013785">
    <property type="entry name" value="Aldolase_TIM"/>
</dbReference>
<dbReference type="InterPro" id="IPR001585">
    <property type="entry name" value="TAL/FSA"/>
</dbReference>
<dbReference type="InterPro" id="IPR022999">
    <property type="entry name" value="Transaldolase_3B"/>
</dbReference>
<dbReference type="InterPro" id="IPR004731">
    <property type="entry name" value="Transaldolase_3B/F6P_aldolase"/>
</dbReference>
<dbReference type="InterPro" id="IPR018225">
    <property type="entry name" value="Transaldolase_AS"/>
</dbReference>
<dbReference type="InterPro" id="IPR033919">
    <property type="entry name" value="TSA/FSA_arc/bac"/>
</dbReference>
<dbReference type="NCBIfam" id="TIGR00875">
    <property type="entry name" value="fsa_talC_mipB"/>
    <property type="match status" value="1"/>
</dbReference>
<dbReference type="PANTHER" id="PTHR10683:SF40">
    <property type="entry name" value="FRUCTOSE-6-PHOSPHATE ALDOLASE 1-RELATED"/>
    <property type="match status" value="1"/>
</dbReference>
<dbReference type="PANTHER" id="PTHR10683">
    <property type="entry name" value="TRANSALDOLASE"/>
    <property type="match status" value="1"/>
</dbReference>
<dbReference type="Pfam" id="PF00923">
    <property type="entry name" value="TAL_FSA"/>
    <property type="match status" value="1"/>
</dbReference>
<dbReference type="SUPFAM" id="SSF51569">
    <property type="entry name" value="Aldolase"/>
    <property type="match status" value="1"/>
</dbReference>
<dbReference type="PROSITE" id="PS01054">
    <property type="entry name" value="TRANSALDOLASE_1"/>
    <property type="match status" value="1"/>
</dbReference>
<comment type="function">
    <text evidence="1">Transaldolase is important for the balance of metabolites in the pentose-phosphate pathway.</text>
</comment>
<comment type="catalytic activity">
    <reaction evidence="1">
        <text>D-sedoheptulose 7-phosphate + D-glyceraldehyde 3-phosphate = D-erythrose 4-phosphate + beta-D-fructose 6-phosphate</text>
        <dbReference type="Rhea" id="RHEA:17053"/>
        <dbReference type="ChEBI" id="CHEBI:16897"/>
        <dbReference type="ChEBI" id="CHEBI:57483"/>
        <dbReference type="ChEBI" id="CHEBI:57634"/>
        <dbReference type="ChEBI" id="CHEBI:59776"/>
        <dbReference type="EC" id="2.2.1.2"/>
    </reaction>
</comment>
<comment type="pathway">
    <text evidence="1">Carbohydrate degradation; pentose phosphate pathway; D-glyceraldehyde 3-phosphate and beta-D-fructose 6-phosphate from D-ribose 5-phosphate and D-xylulose 5-phosphate (non-oxidative stage): step 2/3.</text>
</comment>
<comment type="subcellular location">
    <subcellularLocation>
        <location evidence="1">Cytoplasm</location>
    </subcellularLocation>
</comment>
<comment type="similarity">
    <text evidence="1">Belongs to the transaldolase family. Type 3B subfamily.</text>
</comment>
<accession>A4FWM6</accession>
<gene>
    <name evidence="1" type="primary">tal</name>
    <name type="ordered locus">MmarC5_0285</name>
</gene>
<feature type="chain" id="PRO_1000060470" description="Probable transaldolase">
    <location>
        <begin position="1"/>
        <end position="215"/>
    </location>
</feature>
<feature type="active site" description="Schiff-base intermediate with substrate" evidence="1">
    <location>
        <position position="83"/>
    </location>
</feature>
<organism>
    <name type="scientific">Methanococcus maripaludis (strain C5 / ATCC BAA-1333)</name>
    <dbReference type="NCBI Taxonomy" id="402880"/>
    <lineage>
        <taxon>Archaea</taxon>
        <taxon>Methanobacteriati</taxon>
        <taxon>Methanobacteriota</taxon>
        <taxon>Methanomada group</taxon>
        <taxon>Methanococci</taxon>
        <taxon>Methanococcales</taxon>
        <taxon>Methanococcaceae</taxon>
        <taxon>Methanococcus</taxon>
    </lineage>
</organism>
<sequence length="215" mass="23354">MKFFLDTANVEKIKEFNALGLVDGVTTNPSLIKKEGRDFYEVIKEICSIVDGPVSAEVIALDAEGMVKEARELVKIAENVVVKIPMTKEGMKAVNTLSNEGIKTNVTLIFSANQALLAAKAGASYVSPFVGRLDDVGQDGMFLISEVMQVFGAYGIETEVIVASVRHPIHVLESAKMGADIATIPFDVLDKLFNHPLTDNGIAKFLADWEAHTNR</sequence>
<name>TAL_METM5</name>
<reference key="1">
    <citation type="submission" date="2007-03" db="EMBL/GenBank/DDBJ databases">
        <title>Complete sequence of chromosome of Methanococcus maripaludis C5.</title>
        <authorList>
            <consortium name="US DOE Joint Genome Institute"/>
            <person name="Copeland A."/>
            <person name="Lucas S."/>
            <person name="Lapidus A."/>
            <person name="Barry K."/>
            <person name="Glavina del Rio T."/>
            <person name="Dalin E."/>
            <person name="Tice H."/>
            <person name="Pitluck S."/>
            <person name="Chertkov O."/>
            <person name="Brettin T."/>
            <person name="Bruce D."/>
            <person name="Han C."/>
            <person name="Detter J.C."/>
            <person name="Schmutz J."/>
            <person name="Larimer F."/>
            <person name="Land M."/>
            <person name="Hauser L."/>
            <person name="Kyrpides N."/>
            <person name="Mikhailova N."/>
            <person name="Sieprawska-Lupa M."/>
            <person name="Whitman W.B."/>
            <person name="Richardson P."/>
        </authorList>
    </citation>
    <scope>NUCLEOTIDE SEQUENCE [LARGE SCALE GENOMIC DNA]</scope>
    <source>
        <strain>C5 / ATCC BAA-1333</strain>
    </source>
</reference>
<protein>
    <recommendedName>
        <fullName evidence="1">Probable transaldolase</fullName>
        <ecNumber evidence="1">2.2.1.2</ecNumber>
    </recommendedName>
</protein>
<evidence type="ECO:0000255" key="1">
    <source>
        <dbReference type="HAMAP-Rule" id="MF_00494"/>
    </source>
</evidence>
<proteinExistence type="inferred from homology"/>